<proteinExistence type="evidence at protein level"/>
<comment type="function">
    <text evidence="3 4">Amino acid aminotransferase showing activity for D-Asp and D-Ala as amino donors with 2-oxoglutarate as an amino acceptor. Can also use D-Met, D-Tyr, D-Phe, D-Gln, D-Trp and D-Asn as substrates, but no activity with L-Asp, L-Ala, L-Leu, L-Ile or L-Val. Also catalyzes the reverse reaction where an amino group is transferred from D-Glu to pyruvate or oxaloacetate to produce D-Ala or D-Asp, respectively. Also involved in folate biosynthesis, acting as an aminodeoxychorismate lyase converting 4-amino-4-deoxychorismate (ADC) to p-aminobenzoate (PABA) (PubMed:15500462).</text>
</comment>
<comment type="catalytic activity">
    <reaction evidence="4">
        <text>D-alanine + 2-oxoglutarate = D-glutamate + pyruvate</text>
        <dbReference type="Rhea" id="RHEA:15869"/>
        <dbReference type="ChEBI" id="CHEBI:15361"/>
        <dbReference type="ChEBI" id="CHEBI:16810"/>
        <dbReference type="ChEBI" id="CHEBI:29986"/>
        <dbReference type="ChEBI" id="CHEBI:57416"/>
        <dbReference type="EC" id="2.6.1.21"/>
    </reaction>
</comment>
<comment type="catalytic activity">
    <reaction evidence="3">
        <text>4-amino-4-deoxychorismate = 4-aminobenzoate + pyruvate + H(+)</text>
        <dbReference type="Rhea" id="RHEA:16201"/>
        <dbReference type="ChEBI" id="CHEBI:15361"/>
        <dbReference type="ChEBI" id="CHEBI:15378"/>
        <dbReference type="ChEBI" id="CHEBI:17836"/>
        <dbReference type="ChEBI" id="CHEBI:58406"/>
        <dbReference type="EC" id="4.1.3.38"/>
    </reaction>
</comment>
<comment type="cofactor">
    <cofactor evidence="4">
        <name>pyridoxal 5'-phosphate</name>
        <dbReference type="ChEBI" id="CHEBI:597326"/>
    </cofactor>
</comment>
<comment type="activity regulation">
    <text evidence="4">Inhibited by hydroxylamine or amino-oxyacetic acid.</text>
</comment>
<comment type="biophysicochemical properties">
    <kinetics>
        <KM evidence="4">2.3 mM for D-aspartate</KM>
        <KM evidence="4">1 mM for D-alanine</KM>
        <KM evidence="4">27 mM for 2-oxoglutarate</KM>
        <KM evidence="4">4 mM for D-glutamate</KM>
        <Vmax evidence="4">2.5 umol/min/mg enzyme with D-aspartate as substrate</Vmax>
        <Vmax evidence="4">5.0 umol/min/mg enzyme with D-alanine as substrate</Vmax>
        <Vmax evidence="4">3.3 umol/min/mg enzyme with D-glutamate as substrate</Vmax>
    </kinetics>
</comment>
<comment type="pathway">
    <text>Cofactor biosynthesis; tetrahydrofolate biosynthesis; 4-aminobenzoate from chorismate: step 2/2.</text>
</comment>
<comment type="subunit">
    <text evidence="5">Homodimer.</text>
</comment>
<comment type="subcellular location">
    <subcellularLocation>
        <location evidence="3">Plastid</location>
        <location evidence="3">Chloroplast</location>
    </subcellularLocation>
</comment>
<comment type="similarity">
    <text evidence="8">Belongs to the class-IV pyridoxal-phosphate-dependent aminotransferase family.</text>
</comment>
<comment type="sequence caution" evidence="8">
    <conflict type="erroneous gene model prediction">
        <sequence resource="EMBL-CDS" id="BAB08855"/>
    </conflict>
</comment>
<accession>Q8L493</accession>
<accession>Q9FJM9</accession>
<organism>
    <name type="scientific">Arabidopsis thaliana</name>
    <name type="common">Mouse-ear cress</name>
    <dbReference type="NCBI Taxonomy" id="3702"/>
    <lineage>
        <taxon>Eukaryota</taxon>
        <taxon>Viridiplantae</taxon>
        <taxon>Streptophyta</taxon>
        <taxon>Embryophyta</taxon>
        <taxon>Tracheophyta</taxon>
        <taxon>Spermatophyta</taxon>
        <taxon>Magnoliopsida</taxon>
        <taxon>eudicotyledons</taxon>
        <taxon>Gunneridae</taxon>
        <taxon>Pentapetalae</taxon>
        <taxon>rosids</taxon>
        <taxon>malvids</taxon>
        <taxon>Brassicales</taxon>
        <taxon>Brassicaceae</taxon>
        <taxon>Camelineae</taxon>
        <taxon>Arabidopsis</taxon>
    </lineage>
</organism>
<name>DAAA_ARATH</name>
<evidence type="ECO:0000250" key="1">
    <source>
        <dbReference type="UniProtKB" id="P19938"/>
    </source>
</evidence>
<evidence type="ECO:0000255" key="2"/>
<evidence type="ECO:0000269" key="3">
    <source>
    </source>
</evidence>
<evidence type="ECO:0000269" key="4">
    <source>
    </source>
</evidence>
<evidence type="ECO:0000303" key="5">
    <source>
    </source>
</evidence>
<evidence type="ECO:0000303" key="6">
    <source>
    </source>
</evidence>
<evidence type="ECO:0000303" key="7">
    <source>
    </source>
</evidence>
<evidence type="ECO:0000305" key="8"/>
<evidence type="ECO:0000312" key="9">
    <source>
        <dbReference type="Araport" id="AT5G57850"/>
    </source>
</evidence>
<sequence>MAGLSLEFTVNTWNLRSLSQVPCPLRHGFRFPRRLTRRRTILMCSDSSSQSWNVPVLSSYEVGERLKLARGGQQFLAMYSSVVDGITTDPAAMVLPLDDHMVHRGHGVFDTALIINGYLYELDQHLDRILRSASMAKIPLPFDRETIKRILIQTVSVSGCRDGSLRYWLSAGPGDFLLSPSQCLKPTLYAIVIKTNFAINPIGVKVVTSSIPIKPPEFATVKSVNYLPNVLSQMEAEAKGAYAGIWVCKDGFIAEGPNMNVAFVVNGGKELVMPRFDNVLSGCTAKRTLTLAEQLVSKGILKTVKVMDVTVEDGKKADEMMLIGSGIPIRPVIQWDEEFIGEGKEGPIAKALLDLLLEDMRSGPPSVRVLVPY</sequence>
<gene>
    <name evidence="6" type="primary">DAAT</name>
    <name type="synonym">BCAL3</name>
    <name evidence="9" type="ordered locus">At5g57850</name>
    <name evidence="7" type="ORF">MTI20.10</name>
</gene>
<dbReference type="EC" id="2.6.1.21"/>
<dbReference type="EC" id="4.1.3.38"/>
<dbReference type="EMBL" id="AB013396">
    <property type="protein sequence ID" value="BAB08855.1"/>
    <property type="status" value="ALT_SEQ"/>
    <property type="molecule type" value="Genomic_DNA"/>
</dbReference>
<dbReference type="EMBL" id="CP002688">
    <property type="protein sequence ID" value="AED96959.1"/>
    <property type="molecule type" value="Genomic_DNA"/>
</dbReference>
<dbReference type="EMBL" id="AY099783">
    <property type="protein sequence ID" value="AAM20634.1"/>
    <property type="molecule type" value="mRNA"/>
</dbReference>
<dbReference type="EMBL" id="AY128874">
    <property type="protein sequence ID" value="AAM91274.1"/>
    <property type="molecule type" value="mRNA"/>
</dbReference>
<dbReference type="SMR" id="Q8L493"/>
<dbReference type="FunCoup" id="Q8L493">
    <property type="interactions" value="1172"/>
</dbReference>
<dbReference type="STRING" id="3702.Q8L493"/>
<dbReference type="PaxDb" id="3702-AT5G57850.1"/>
<dbReference type="ProteomicsDB" id="224698"/>
<dbReference type="EnsemblPlants" id="AT5G57850.1">
    <property type="protein sequence ID" value="AT5G57850.1"/>
    <property type="gene ID" value="AT5G57850"/>
</dbReference>
<dbReference type="GeneID" id="835895"/>
<dbReference type="Gramene" id="AT5G57850.1">
    <property type="protein sequence ID" value="AT5G57850.1"/>
    <property type="gene ID" value="AT5G57850"/>
</dbReference>
<dbReference type="KEGG" id="ath:AT5G57850"/>
<dbReference type="Araport" id="AT5G57850"/>
<dbReference type="TAIR" id="AT5G57850">
    <property type="gene designation" value="ADCL"/>
</dbReference>
<dbReference type="eggNOG" id="KOG0975">
    <property type="taxonomic scope" value="Eukaryota"/>
</dbReference>
<dbReference type="HOGENOM" id="CLU_020844_0_0_1"/>
<dbReference type="InParanoid" id="Q8L493"/>
<dbReference type="OrthoDB" id="25921at2759"/>
<dbReference type="PhylomeDB" id="Q8L493"/>
<dbReference type="BioCyc" id="ARA:AT5G57850-MONOMER"/>
<dbReference type="BioCyc" id="MetaCyc:AT5G57850-MONOMER"/>
<dbReference type="BRENDA" id="2.6.1.21">
    <property type="organism ID" value="399"/>
</dbReference>
<dbReference type="SABIO-RK" id="Q8L493"/>
<dbReference type="UniPathway" id="UPA00077">
    <property type="reaction ID" value="UER00150"/>
</dbReference>
<dbReference type="PRO" id="PR:Q8L493"/>
<dbReference type="Proteomes" id="UP000006548">
    <property type="component" value="Chromosome 5"/>
</dbReference>
<dbReference type="ExpressionAtlas" id="Q8L493">
    <property type="expression patterns" value="baseline and differential"/>
</dbReference>
<dbReference type="GO" id="GO:0009507">
    <property type="term" value="C:chloroplast"/>
    <property type="evidence" value="ECO:0000314"/>
    <property type="project" value="TAIR"/>
</dbReference>
<dbReference type="GO" id="GO:0009570">
    <property type="term" value="C:chloroplast stroma"/>
    <property type="evidence" value="ECO:0007005"/>
    <property type="project" value="TAIR"/>
</dbReference>
<dbReference type="GO" id="GO:0008696">
    <property type="term" value="F:4-amino-4-deoxychorismate lyase activity"/>
    <property type="evidence" value="ECO:0007669"/>
    <property type="project" value="UniProtKB-EC"/>
</dbReference>
<dbReference type="GO" id="GO:0047810">
    <property type="term" value="F:D-alanine-2-oxoglutarate aminotransferase activity"/>
    <property type="evidence" value="ECO:0007669"/>
    <property type="project" value="UniProtKB-EC"/>
</dbReference>
<dbReference type="GO" id="GO:0008153">
    <property type="term" value="P:4-aminobenzoate biosynthetic process"/>
    <property type="evidence" value="ECO:0000314"/>
    <property type="project" value="TAIR"/>
</dbReference>
<dbReference type="GO" id="GO:0046654">
    <property type="term" value="P:tetrahydrofolate biosynthetic process"/>
    <property type="evidence" value="ECO:0007669"/>
    <property type="project" value="UniProtKB-UniPathway"/>
</dbReference>
<dbReference type="FunFam" id="3.20.10.10:FF:000002">
    <property type="entry name" value="D-alanine aminotransferase"/>
    <property type="match status" value="1"/>
</dbReference>
<dbReference type="FunFam" id="3.30.470.10:FF:000008">
    <property type="entry name" value="D-amino-acid transaminase, chloroplastic"/>
    <property type="match status" value="1"/>
</dbReference>
<dbReference type="Gene3D" id="3.30.470.10">
    <property type="match status" value="1"/>
</dbReference>
<dbReference type="Gene3D" id="3.20.10.10">
    <property type="entry name" value="D-amino Acid Aminotransferase, subunit A, domain 2"/>
    <property type="match status" value="1"/>
</dbReference>
<dbReference type="InterPro" id="IPR001544">
    <property type="entry name" value="Aminotrans_IV"/>
</dbReference>
<dbReference type="InterPro" id="IPR036038">
    <property type="entry name" value="Aminotransferase-like"/>
</dbReference>
<dbReference type="InterPro" id="IPR043132">
    <property type="entry name" value="BCAT-like_C"/>
</dbReference>
<dbReference type="InterPro" id="IPR043131">
    <property type="entry name" value="BCAT-like_N"/>
</dbReference>
<dbReference type="InterPro" id="IPR050571">
    <property type="entry name" value="Class-IV_PLP-Dep_Aminotrnsfr"/>
</dbReference>
<dbReference type="PANTHER" id="PTHR42743">
    <property type="entry name" value="AMINO-ACID AMINOTRANSFERASE"/>
    <property type="match status" value="1"/>
</dbReference>
<dbReference type="PANTHER" id="PTHR42743:SF22">
    <property type="entry name" value="D-AMINO-ACID TRANSAMINASE, CHLOROPLASTIC"/>
    <property type="match status" value="1"/>
</dbReference>
<dbReference type="Pfam" id="PF01063">
    <property type="entry name" value="Aminotran_4"/>
    <property type="match status" value="1"/>
</dbReference>
<dbReference type="SUPFAM" id="SSF56752">
    <property type="entry name" value="D-aminoacid aminotransferase-like PLP-dependent enzymes"/>
    <property type="match status" value="1"/>
</dbReference>
<reference key="1">
    <citation type="journal article" date="1998" name="DNA Res.">
        <title>Structural analysis of Arabidopsis thaliana chromosome 5. VI. Sequence features of the regions of 1,367,185 bp covered by 19 physically assigned P1 and TAC clones.</title>
        <authorList>
            <person name="Kotani H."/>
            <person name="Nakamura Y."/>
            <person name="Sato S."/>
            <person name="Asamizu E."/>
            <person name="Kaneko T."/>
            <person name="Miyajima N."/>
            <person name="Tabata S."/>
        </authorList>
    </citation>
    <scope>NUCLEOTIDE SEQUENCE [LARGE SCALE GENOMIC DNA]</scope>
    <source>
        <strain>cv. Columbia</strain>
    </source>
</reference>
<reference key="2">
    <citation type="journal article" date="2017" name="Plant J.">
        <title>Araport11: a complete reannotation of the Arabidopsis thaliana reference genome.</title>
        <authorList>
            <person name="Cheng C.Y."/>
            <person name="Krishnakumar V."/>
            <person name="Chan A.P."/>
            <person name="Thibaud-Nissen F."/>
            <person name="Schobel S."/>
            <person name="Town C.D."/>
        </authorList>
    </citation>
    <scope>GENOME REANNOTATION</scope>
    <source>
        <strain>cv. Columbia</strain>
    </source>
</reference>
<reference key="3">
    <citation type="journal article" date="2003" name="Science">
        <title>Empirical analysis of transcriptional activity in the Arabidopsis genome.</title>
        <authorList>
            <person name="Yamada K."/>
            <person name="Lim J."/>
            <person name="Dale J.M."/>
            <person name="Chen H."/>
            <person name="Shinn P."/>
            <person name="Palm C.J."/>
            <person name="Southwick A.M."/>
            <person name="Wu H.C."/>
            <person name="Kim C.J."/>
            <person name="Nguyen M."/>
            <person name="Pham P.K."/>
            <person name="Cheuk R.F."/>
            <person name="Karlin-Newmann G."/>
            <person name="Liu S.X."/>
            <person name="Lam B."/>
            <person name="Sakano H."/>
            <person name="Wu T."/>
            <person name="Yu G."/>
            <person name="Miranda M."/>
            <person name="Quach H.L."/>
            <person name="Tripp M."/>
            <person name="Chang C.H."/>
            <person name="Lee J.M."/>
            <person name="Toriumi M.J."/>
            <person name="Chan M.M."/>
            <person name="Tang C.C."/>
            <person name="Onodera C.S."/>
            <person name="Deng J.M."/>
            <person name="Akiyama K."/>
            <person name="Ansari Y."/>
            <person name="Arakawa T."/>
            <person name="Banh J."/>
            <person name="Banno F."/>
            <person name="Bowser L."/>
            <person name="Brooks S.Y."/>
            <person name="Carninci P."/>
            <person name="Chao Q."/>
            <person name="Choy N."/>
            <person name="Enju A."/>
            <person name="Goldsmith A.D."/>
            <person name="Gurjal M."/>
            <person name="Hansen N.F."/>
            <person name="Hayashizaki Y."/>
            <person name="Johnson-Hopson C."/>
            <person name="Hsuan V.W."/>
            <person name="Iida K."/>
            <person name="Karnes M."/>
            <person name="Khan S."/>
            <person name="Koesema E."/>
            <person name="Ishida J."/>
            <person name="Jiang P.X."/>
            <person name="Jones T."/>
            <person name="Kawai J."/>
            <person name="Kamiya A."/>
            <person name="Meyers C."/>
            <person name="Nakajima M."/>
            <person name="Narusaka M."/>
            <person name="Seki M."/>
            <person name="Sakurai T."/>
            <person name="Satou M."/>
            <person name="Tamse R."/>
            <person name="Vaysberg M."/>
            <person name="Wallender E.K."/>
            <person name="Wong C."/>
            <person name="Yamamura Y."/>
            <person name="Yuan S."/>
            <person name="Shinozaki K."/>
            <person name="Davis R.W."/>
            <person name="Theologis A."/>
            <person name="Ecker J.R."/>
        </authorList>
    </citation>
    <scope>NUCLEOTIDE SEQUENCE [LARGE SCALE MRNA]</scope>
    <source>
        <strain>cv. Columbia</strain>
    </source>
</reference>
<reference key="4">
    <citation type="journal article" date="2004" name="Plant J.">
        <title>Folate synthesis in plants: the last step of the p-aminobenzoate branch is catalyzed by a plastidial aminodeoxychorismate lyase.</title>
        <authorList>
            <person name="Basset G.J."/>
            <person name="Ravanel S."/>
            <person name="Quinlivan E.P."/>
            <person name="White R."/>
            <person name="Giovannoni J.J."/>
            <person name="Rebeille F."/>
            <person name="Nichols B.P."/>
            <person name="Shinozaki K."/>
            <person name="Seki M."/>
            <person name="Gregory J.F."/>
            <person name="Hanson A.D."/>
        </authorList>
    </citation>
    <scope>FUNCTION</scope>
    <scope>CATALYTIC ACTIVITY</scope>
    <scope>SUBCELLULAR LOCATION</scope>
    <scope>SUBUNIT</scope>
</reference>
<reference key="5">
    <citation type="journal article" date="2008" name="FEBS J.">
        <title>Cloning and functional characterization of Arabidopsis thaliana D-amino acid aminotransferase--D-aspartate behavior during germination.</title>
        <authorList>
            <person name="Funakoshi M."/>
            <person name="Sekine M."/>
            <person name="Katane M."/>
            <person name="Furuchi T."/>
            <person name="Yohda M."/>
            <person name="Yoshikawa T."/>
            <person name="Homma H."/>
        </authorList>
    </citation>
    <scope>FUNCTION</scope>
    <scope>CATALYTIC ACTIVITY</scope>
    <scope>BIOPHYSICOCHEMICAL PROPERTIES</scope>
    <scope>COFACTOR</scope>
    <scope>ACTIVITY REGULATION</scope>
    <source>
        <strain>cv. Columbia</strain>
    </source>
</reference>
<keyword id="KW-0032">Aminotransferase</keyword>
<keyword id="KW-0150">Chloroplast</keyword>
<keyword id="KW-0456">Lyase</keyword>
<keyword id="KW-0934">Plastid</keyword>
<keyword id="KW-0663">Pyridoxal phosphate</keyword>
<keyword id="KW-1185">Reference proteome</keyword>
<keyword id="KW-0808">Transferase</keyword>
<keyword id="KW-0809">Transit peptide</keyword>
<protein>
    <recommendedName>
        <fullName evidence="6">D-amino-acid transaminase, chloroplastic</fullName>
        <ecNumber>2.6.1.21</ecNumber>
        <ecNumber>4.1.3.38</ecNumber>
    </recommendedName>
    <alternativeName>
        <fullName evidence="5">Aminodeoxychorismate lyase</fullName>
        <shortName>AtADCL</shortName>
    </alternativeName>
    <alternativeName>
        <fullName>Branched-chain-amino-acid aminotransferase-like protein 3</fullName>
    </alternativeName>
</protein>
<feature type="transit peptide" description="Chloroplast" evidence="2">
    <location>
        <begin position="1"/>
        <end position="57"/>
    </location>
</feature>
<feature type="chain" id="PRO_0000001279" description="D-amino-acid transaminase, chloroplastic">
    <location>
        <begin position="58"/>
        <end position="373"/>
    </location>
</feature>
<feature type="active site" description="Proton acceptor" evidence="1">
    <location>
        <position position="222"/>
    </location>
</feature>
<feature type="binding site" evidence="1">
    <location>
        <position position="128"/>
    </location>
    <ligand>
        <name>pyridoxal 5'-phosphate</name>
        <dbReference type="ChEBI" id="CHEBI:597326"/>
    </ligand>
</feature>
<feature type="binding site" evidence="1">
    <location>
        <position position="255"/>
    </location>
    <ligand>
        <name>pyridoxal 5'-phosphate</name>
        <dbReference type="ChEBI" id="CHEBI:597326"/>
    </ligand>
</feature>
<feature type="modified residue" description="N6-(pyridoxal phosphate)lysine" evidence="1">
    <location>
        <position position="222"/>
    </location>
</feature>